<dbReference type="EC" id="6.3.3.1" evidence="1"/>
<dbReference type="EMBL" id="CP001614">
    <property type="protein sequence ID" value="ACR11270.1"/>
    <property type="molecule type" value="Genomic_DNA"/>
</dbReference>
<dbReference type="RefSeq" id="WP_015817382.1">
    <property type="nucleotide sequence ID" value="NC_012997.1"/>
</dbReference>
<dbReference type="SMR" id="C5BP01"/>
<dbReference type="STRING" id="377629.TERTU_3013"/>
<dbReference type="KEGG" id="ttu:TERTU_3013"/>
<dbReference type="eggNOG" id="COG0150">
    <property type="taxonomic scope" value="Bacteria"/>
</dbReference>
<dbReference type="HOGENOM" id="CLU_047116_0_0_6"/>
<dbReference type="OrthoDB" id="9777881at2"/>
<dbReference type="UniPathway" id="UPA00074">
    <property type="reaction ID" value="UER00129"/>
</dbReference>
<dbReference type="Proteomes" id="UP000009080">
    <property type="component" value="Chromosome"/>
</dbReference>
<dbReference type="GO" id="GO:0005829">
    <property type="term" value="C:cytosol"/>
    <property type="evidence" value="ECO:0007669"/>
    <property type="project" value="TreeGrafter"/>
</dbReference>
<dbReference type="GO" id="GO:0005524">
    <property type="term" value="F:ATP binding"/>
    <property type="evidence" value="ECO:0007669"/>
    <property type="project" value="UniProtKB-KW"/>
</dbReference>
<dbReference type="GO" id="GO:0004637">
    <property type="term" value="F:phosphoribosylamine-glycine ligase activity"/>
    <property type="evidence" value="ECO:0007669"/>
    <property type="project" value="TreeGrafter"/>
</dbReference>
<dbReference type="GO" id="GO:0004641">
    <property type="term" value="F:phosphoribosylformylglycinamidine cyclo-ligase activity"/>
    <property type="evidence" value="ECO:0007669"/>
    <property type="project" value="UniProtKB-UniRule"/>
</dbReference>
<dbReference type="GO" id="GO:0006189">
    <property type="term" value="P:'de novo' IMP biosynthetic process"/>
    <property type="evidence" value="ECO:0007669"/>
    <property type="project" value="UniProtKB-UniRule"/>
</dbReference>
<dbReference type="GO" id="GO:0046084">
    <property type="term" value="P:adenine biosynthetic process"/>
    <property type="evidence" value="ECO:0007669"/>
    <property type="project" value="TreeGrafter"/>
</dbReference>
<dbReference type="CDD" id="cd02196">
    <property type="entry name" value="PurM"/>
    <property type="match status" value="1"/>
</dbReference>
<dbReference type="FunFam" id="3.30.1330.10:FF:000001">
    <property type="entry name" value="Phosphoribosylformylglycinamidine cyclo-ligase"/>
    <property type="match status" value="1"/>
</dbReference>
<dbReference type="FunFam" id="3.90.650.10:FF:000001">
    <property type="entry name" value="Phosphoribosylformylglycinamidine cyclo-ligase"/>
    <property type="match status" value="1"/>
</dbReference>
<dbReference type="Gene3D" id="3.90.650.10">
    <property type="entry name" value="PurM-like C-terminal domain"/>
    <property type="match status" value="1"/>
</dbReference>
<dbReference type="Gene3D" id="3.30.1330.10">
    <property type="entry name" value="PurM-like, N-terminal domain"/>
    <property type="match status" value="1"/>
</dbReference>
<dbReference type="HAMAP" id="MF_00741">
    <property type="entry name" value="AIRS"/>
    <property type="match status" value="1"/>
</dbReference>
<dbReference type="InterPro" id="IPR010918">
    <property type="entry name" value="PurM-like_C_dom"/>
</dbReference>
<dbReference type="InterPro" id="IPR036676">
    <property type="entry name" value="PurM-like_C_sf"/>
</dbReference>
<dbReference type="InterPro" id="IPR016188">
    <property type="entry name" value="PurM-like_N"/>
</dbReference>
<dbReference type="InterPro" id="IPR036921">
    <property type="entry name" value="PurM-like_N_sf"/>
</dbReference>
<dbReference type="InterPro" id="IPR004733">
    <property type="entry name" value="PurM_cligase"/>
</dbReference>
<dbReference type="NCBIfam" id="TIGR00878">
    <property type="entry name" value="purM"/>
    <property type="match status" value="1"/>
</dbReference>
<dbReference type="PANTHER" id="PTHR10520:SF12">
    <property type="entry name" value="TRIFUNCTIONAL PURINE BIOSYNTHETIC PROTEIN ADENOSINE-3"/>
    <property type="match status" value="1"/>
</dbReference>
<dbReference type="PANTHER" id="PTHR10520">
    <property type="entry name" value="TRIFUNCTIONAL PURINE BIOSYNTHETIC PROTEIN ADENOSINE-3-RELATED"/>
    <property type="match status" value="1"/>
</dbReference>
<dbReference type="Pfam" id="PF00586">
    <property type="entry name" value="AIRS"/>
    <property type="match status" value="1"/>
</dbReference>
<dbReference type="Pfam" id="PF02769">
    <property type="entry name" value="AIRS_C"/>
    <property type="match status" value="1"/>
</dbReference>
<dbReference type="SUPFAM" id="SSF56042">
    <property type="entry name" value="PurM C-terminal domain-like"/>
    <property type="match status" value="1"/>
</dbReference>
<dbReference type="SUPFAM" id="SSF55326">
    <property type="entry name" value="PurM N-terminal domain-like"/>
    <property type="match status" value="1"/>
</dbReference>
<comment type="catalytic activity">
    <reaction evidence="1">
        <text>2-formamido-N(1)-(5-O-phospho-beta-D-ribosyl)acetamidine + ATP = 5-amino-1-(5-phospho-beta-D-ribosyl)imidazole + ADP + phosphate + H(+)</text>
        <dbReference type="Rhea" id="RHEA:23032"/>
        <dbReference type="ChEBI" id="CHEBI:15378"/>
        <dbReference type="ChEBI" id="CHEBI:30616"/>
        <dbReference type="ChEBI" id="CHEBI:43474"/>
        <dbReference type="ChEBI" id="CHEBI:137981"/>
        <dbReference type="ChEBI" id="CHEBI:147287"/>
        <dbReference type="ChEBI" id="CHEBI:456216"/>
        <dbReference type="EC" id="6.3.3.1"/>
    </reaction>
</comment>
<comment type="pathway">
    <text evidence="1">Purine metabolism; IMP biosynthesis via de novo pathway; 5-amino-1-(5-phospho-D-ribosyl)imidazole from N(2)-formyl-N(1)-(5-phospho-D-ribosyl)glycinamide: step 2/2.</text>
</comment>
<comment type="subcellular location">
    <subcellularLocation>
        <location evidence="1">Cytoplasm</location>
    </subcellularLocation>
</comment>
<comment type="similarity">
    <text evidence="1">Belongs to the AIR synthase family.</text>
</comment>
<protein>
    <recommendedName>
        <fullName evidence="1">Phosphoribosylformylglycinamidine cyclo-ligase</fullName>
        <ecNumber evidence="1">6.3.3.1</ecNumber>
    </recommendedName>
    <alternativeName>
        <fullName evidence="1">AIR synthase</fullName>
    </alternativeName>
    <alternativeName>
        <fullName evidence="1">AIRS</fullName>
    </alternativeName>
    <alternativeName>
        <fullName evidence="1">Phosphoribosyl-aminoimidazole synthetase</fullName>
    </alternativeName>
</protein>
<keyword id="KW-0067">ATP-binding</keyword>
<keyword id="KW-0963">Cytoplasm</keyword>
<keyword id="KW-0436">Ligase</keyword>
<keyword id="KW-0547">Nucleotide-binding</keyword>
<keyword id="KW-0658">Purine biosynthesis</keyword>
<keyword id="KW-1185">Reference proteome</keyword>
<accession>C5BP01</accession>
<sequence length="352" mass="37283">MTDQSSSNSPSLSYKDAGVDIDAGNDLVERIKSVAKRTRRPEVMAGLGGFGALFELPSGYNQPVLVSGTDGVGTKLKLAMQLNKHDTIGIDLVAMCVNDLIVGGAEPLFFLDYYATGKLSVDIAAQVVEGIGNGCELAGCSLVGGETAEMPGMYEGDDYDLAGFCVGIVEKAKIIDGSKVATGDTLIGLPSSGPHSNGYSLIRKILEVSNADLNEDVGGKPLREALMEPTRIYVKTLLALFAELDVKALSHITGGGLTENIPRVLPDNAKAVIDCASWEFPPVFSWLQQRGNVADTEMYRTFNCGVGMVICVSANDAERAISFLSDAGEAPFVIGQIEPLAAGEEQVELRRN</sequence>
<gene>
    <name evidence="1" type="primary">purM</name>
    <name type="ordered locus">TERTU_3013</name>
</gene>
<evidence type="ECO:0000255" key="1">
    <source>
        <dbReference type="HAMAP-Rule" id="MF_00741"/>
    </source>
</evidence>
<organism>
    <name type="scientific">Teredinibacter turnerae (strain ATCC 39867 / T7901)</name>
    <dbReference type="NCBI Taxonomy" id="377629"/>
    <lineage>
        <taxon>Bacteria</taxon>
        <taxon>Pseudomonadati</taxon>
        <taxon>Pseudomonadota</taxon>
        <taxon>Gammaproteobacteria</taxon>
        <taxon>Cellvibrionales</taxon>
        <taxon>Cellvibrionaceae</taxon>
        <taxon>Teredinibacter</taxon>
    </lineage>
</organism>
<name>PUR5_TERTT</name>
<proteinExistence type="inferred from homology"/>
<reference key="1">
    <citation type="journal article" date="2009" name="PLoS ONE">
        <title>The complete genome of Teredinibacter turnerae T7901: an intracellular endosymbiont of marine wood-boring bivalves (shipworms).</title>
        <authorList>
            <person name="Yang J.C."/>
            <person name="Madupu R."/>
            <person name="Durkin A.S."/>
            <person name="Ekborg N.A."/>
            <person name="Pedamallu C.S."/>
            <person name="Hostetler J.B."/>
            <person name="Radune D."/>
            <person name="Toms B.S."/>
            <person name="Henrissat B."/>
            <person name="Coutinho P.M."/>
            <person name="Schwarz S."/>
            <person name="Field L."/>
            <person name="Trindade-Silva A.E."/>
            <person name="Soares C.A.G."/>
            <person name="Elshahawi S."/>
            <person name="Hanora A."/>
            <person name="Schmidt E.W."/>
            <person name="Haygood M.G."/>
            <person name="Posfai J."/>
            <person name="Benner J."/>
            <person name="Madinger C."/>
            <person name="Nove J."/>
            <person name="Anton B."/>
            <person name="Chaudhary K."/>
            <person name="Foster J."/>
            <person name="Holman A."/>
            <person name="Kumar S."/>
            <person name="Lessard P.A."/>
            <person name="Luyten Y.A."/>
            <person name="Slatko B."/>
            <person name="Wood N."/>
            <person name="Wu B."/>
            <person name="Teplitski M."/>
            <person name="Mougous J.D."/>
            <person name="Ward N."/>
            <person name="Eisen J.A."/>
            <person name="Badger J.H."/>
            <person name="Distel D.L."/>
        </authorList>
    </citation>
    <scope>NUCLEOTIDE SEQUENCE [LARGE SCALE GENOMIC DNA]</scope>
    <source>
        <strain>ATCC 39867 / T7901</strain>
    </source>
</reference>
<feature type="chain" id="PRO_1000212830" description="Phosphoribosylformylglycinamidine cyclo-ligase">
    <location>
        <begin position="1"/>
        <end position="352"/>
    </location>
</feature>